<sequence length="174" mass="19151">MTQPLFLIGPRGCGKTTVGMALADSLNRRFVDTDQWLQSQLNMTVAEIVEREEWAGFRARETAALEAVTAPSTVIATGGGIILTEFNRHFMQNNGIVVYLCAPVSVLVNRLQAAPEEDLRPTLTGKPLSEEVQEVLEERDALYREVAHIIIDATNEPSQVISEIRSALAQTINC</sequence>
<keyword id="KW-0028">Amino-acid biosynthesis</keyword>
<keyword id="KW-0057">Aromatic amino acid biosynthesis</keyword>
<keyword id="KW-0067">ATP-binding</keyword>
<keyword id="KW-0963">Cytoplasm</keyword>
<keyword id="KW-0418">Kinase</keyword>
<keyword id="KW-0460">Magnesium</keyword>
<keyword id="KW-0479">Metal-binding</keyword>
<keyword id="KW-0547">Nucleotide-binding</keyword>
<keyword id="KW-0808">Transferase</keyword>
<feature type="initiator methionine" description="Removed" evidence="1">
    <location>
        <position position="1"/>
    </location>
</feature>
<feature type="chain" id="PRO_0000237930" description="Shikimate kinase 2">
    <location>
        <begin position="2"/>
        <end position="174"/>
    </location>
</feature>
<feature type="region of interest" description="LID domain">
    <location>
        <begin position="112"/>
        <end position="126"/>
    </location>
</feature>
<feature type="binding site" evidence="2">
    <location>
        <begin position="12"/>
        <end position="17"/>
    </location>
    <ligand>
        <name>ATP</name>
        <dbReference type="ChEBI" id="CHEBI:30616"/>
    </ligand>
</feature>
<feature type="binding site" evidence="2">
    <location>
        <position position="16"/>
    </location>
    <ligand>
        <name>Mg(2+)</name>
        <dbReference type="ChEBI" id="CHEBI:18420"/>
    </ligand>
</feature>
<feature type="binding site" evidence="2">
    <location>
        <position position="32"/>
    </location>
    <ligand>
        <name>Mg(2+)</name>
        <dbReference type="ChEBI" id="CHEBI:18420"/>
    </ligand>
</feature>
<feature type="binding site" evidence="2">
    <location>
        <position position="34"/>
    </location>
    <ligand>
        <name>substrate</name>
    </ligand>
</feature>
<feature type="binding site" evidence="2">
    <location>
        <position position="58"/>
    </location>
    <ligand>
        <name>substrate</name>
    </ligand>
</feature>
<feature type="binding site" evidence="2">
    <location>
        <position position="79"/>
    </location>
    <ligand>
        <name>substrate</name>
    </ligand>
</feature>
<feature type="binding site" evidence="2">
    <location>
        <position position="120"/>
    </location>
    <ligand>
        <name>ATP</name>
        <dbReference type="ChEBI" id="CHEBI:30616"/>
    </ligand>
</feature>
<feature type="binding site" evidence="2">
    <location>
        <position position="139"/>
    </location>
    <ligand>
        <name>substrate</name>
    </ligand>
</feature>
<evidence type="ECO:0000250" key="1"/>
<evidence type="ECO:0000255" key="2">
    <source>
        <dbReference type="HAMAP-Rule" id="MF_01269"/>
    </source>
</evidence>
<comment type="function">
    <text evidence="2">Catalyzes the specific phosphorylation of the 3-hydroxyl group of shikimic acid using ATP as a cosubstrate.</text>
</comment>
<comment type="catalytic activity">
    <reaction evidence="2">
        <text>shikimate + ATP = 3-phosphoshikimate + ADP + H(+)</text>
        <dbReference type="Rhea" id="RHEA:13121"/>
        <dbReference type="ChEBI" id="CHEBI:15378"/>
        <dbReference type="ChEBI" id="CHEBI:30616"/>
        <dbReference type="ChEBI" id="CHEBI:36208"/>
        <dbReference type="ChEBI" id="CHEBI:145989"/>
        <dbReference type="ChEBI" id="CHEBI:456216"/>
        <dbReference type="EC" id="2.7.1.71"/>
    </reaction>
</comment>
<comment type="cofactor">
    <cofactor evidence="2">
        <name>Mg(2+)</name>
        <dbReference type="ChEBI" id="CHEBI:18420"/>
    </cofactor>
    <text evidence="2">Binds 1 Mg(2+) ion per subunit.</text>
</comment>
<comment type="pathway">
    <text evidence="2">Metabolic intermediate biosynthesis; chorismate biosynthesis; chorismate from D-erythrose 4-phosphate and phosphoenolpyruvate: step 5/7.</text>
</comment>
<comment type="subunit">
    <text evidence="2">Monomer.</text>
</comment>
<comment type="subcellular location">
    <subcellularLocation>
        <location evidence="2">Cytoplasm</location>
    </subcellularLocation>
</comment>
<comment type="domain">
    <text evidence="2">The LID domain closes over the active site upon ATP binding.</text>
</comment>
<comment type="similarity">
    <text evidence="2">Belongs to the shikimate kinase family. AroL subfamily.</text>
</comment>
<reference key="1">
    <citation type="journal article" date="2005" name="Nucleic Acids Res.">
        <title>Genome dynamics and diversity of Shigella species, the etiologic agents of bacillary dysentery.</title>
        <authorList>
            <person name="Yang F."/>
            <person name="Yang J."/>
            <person name="Zhang X."/>
            <person name="Chen L."/>
            <person name="Jiang Y."/>
            <person name="Yan Y."/>
            <person name="Tang X."/>
            <person name="Wang J."/>
            <person name="Xiong Z."/>
            <person name="Dong J."/>
            <person name="Xue Y."/>
            <person name="Zhu Y."/>
            <person name="Xu X."/>
            <person name="Sun L."/>
            <person name="Chen S."/>
            <person name="Nie H."/>
            <person name="Peng J."/>
            <person name="Xu J."/>
            <person name="Wang Y."/>
            <person name="Yuan Z."/>
            <person name="Wen Y."/>
            <person name="Yao Z."/>
            <person name="Shen Y."/>
            <person name="Qiang B."/>
            <person name="Hou Y."/>
            <person name="Yu J."/>
            <person name="Jin Q."/>
        </authorList>
    </citation>
    <scope>NUCLEOTIDE SEQUENCE [LARGE SCALE GENOMIC DNA]</scope>
    <source>
        <strain>Sb227</strain>
    </source>
</reference>
<name>AROL_SHIBS</name>
<gene>
    <name evidence="2" type="primary">aroL</name>
    <name type="ordered locus">SBO_0283</name>
</gene>
<proteinExistence type="inferred from homology"/>
<dbReference type="EC" id="2.7.1.71" evidence="2"/>
<dbReference type="EMBL" id="CP000036">
    <property type="protein sequence ID" value="ABB64998.1"/>
    <property type="molecule type" value="Genomic_DNA"/>
</dbReference>
<dbReference type="RefSeq" id="WP_000193393.1">
    <property type="nucleotide sequence ID" value="NC_007613.1"/>
</dbReference>
<dbReference type="SMR" id="Q325L0"/>
<dbReference type="GeneID" id="93777073"/>
<dbReference type="KEGG" id="sbo:SBO_0283"/>
<dbReference type="HOGENOM" id="CLU_057607_4_3_6"/>
<dbReference type="UniPathway" id="UPA00053">
    <property type="reaction ID" value="UER00088"/>
</dbReference>
<dbReference type="Proteomes" id="UP000007067">
    <property type="component" value="Chromosome"/>
</dbReference>
<dbReference type="GO" id="GO:0005829">
    <property type="term" value="C:cytosol"/>
    <property type="evidence" value="ECO:0007669"/>
    <property type="project" value="TreeGrafter"/>
</dbReference>
<dbReference type="GO" id="GO:0005524">
    <property type="term" value="F:ATP binding"/>
    <property type="evidence" value="ECO:0007669"/>
    <property type="project" value="UniProtKB-UniRule"/>
</dbReference>
<dbReference type="GO" id="GO:0000287">
    <property type="term" value="F:magnesium ion binding"/>
    <property type="evidence" value="ECO:0007669"/>
    <property type="project" value="UniProtKB-UniRule"/>
</dbReference>
<dbReference type="GO" id="GO:0004765">
    <property type="term" value="F:shikimate kinase activity"/>
    <property type="evidence" value="ECO:0007669"/>
    <property type="project" value="UniProtKB-UniRule"/>
</dbReference>
<dbReference type="GO" id="GO:0008652">
    <property type="term" value="P:amino acid biosynthetic process"/>
    <property type="evidence" value="ECO:0007669"/>
    <property type="project" value="UniProtKB-KW"/>
</dbReference>
<dbReference type="GO" id="GO:0009073">
    <property type="term" value="P:aromatic amino acid family biosynthetic process"/>
    <property type="evidence" value="ECO:0007669"/>
    <property type="project" value="UniProtKB-KW"/>
</dbReference>
<dbReference type="GO" id="GO:0009423">
    <property type="term" value="P:chorismate biosynthetic process"/>
    <property type="evidence" value="ECO:0007669"/>
    <property type="project" value="UniProtKB-UniRule"/>
</dbReference>
<dbReference type="CDD" id="cd00464">
    <property type="entry name" value="SK"/>
    <property type="match status" value="1"/>
</dbReference>
<dbReference type="FunFam" id="3.40.50.300:FF:000408">
    <property type="entry name" value="Shikimate kinase 2"/>
    <property type="match status" value="1"/>
</dbReference>
<dbReference type="Gene3D" id="3.40.50.300">
    <property type="entry name" value="P-loop containing nucleotide triphosphate hydrolases"/>
    <property type="match status" value="1"/>
</dbReference>
<dbReference type="HAMAP" id="MF_00109">
    <property type="entry name" value="Shikimate_kinase"/>
    <property type="match status" value="1"/>
</dbReference>
<dbReference type="HAMAP" id="MF_01269">
    <property type="entry name" value="Shikimate_kinase_2"/>
    <property type="match status" value="1"/>
</dbReference>
<dbReference type="InterPro" id="IPR027417">
    <property type="entry name" value="P-loop_NTPase"/>
</dbReference>
<dbReference type="InterPro" id="IPR031322">
    <property type="entry name" value="Shikimate/glucono_kinase"/>
</dbReference>
<dbReference type="InterPro" id="IPR000623">
    <property type="entry name" value="Shikimate_kinase/TSH1"/>
</dbReference>
<dbReference type="InterPro" id="IPR027544">
    <property type="entry name" value="Shikimate_kinase_2"/>
</dbReference>
<dbReference type="InterPro" id="IPR023000">
    <property type="entry name" value="Shikimate_kinase_CS"/>
</dbReference>
<dbReference type="NCBIfam" id="NF002988">
    <property type="entry name" value="PRK03731.1"/>
    <property type="match status" value="1"/>
</dbReference>
<dbReference type="PANTHER" id="PTHR21087">
    <property type="entry name" value="SHIKIMATE KINASE"/>
    <property type="match status" value="1"/>
</dbReference>
<dbReference type="PANTHER" id="PTHR21087:SF21">
    <property type="entry name" value="SHIKIMATE KINASE 2"/>
    <property type="match status" value="1"/>
</dbReference>
<dbReference type="Pfam" id="PF01202">
    <property type="entry name" value="SKI"/>
    <property type="match status" value="1"/>
</dbReference>
<dbReference type="PRINTS" id="PR01100">
    <property type="entry name" value="SHIKIMTKNASE"/>
</dbReference>
<dbReference type="SUPFAM" id="SSF52540">
    <property type="entry name" value="P-loop containing nucleoside triphosphate hydrolases"/>
    <property type="match status" value="1"/>
</dbReference>
<dbReference type="PROSITE" id="PS01128">
    <property type="entry name" value="SHIKIMATE_KINASE"/>
    <property type="match status" value="1"/>
</dbReference>
<organism>
    <name type="scientific">Shigella boydii serotype 4 (strain Sb227)</name>
    <dbReference type="NCBI Taxonomy" id="300268"/>
    <lineage>
        <taxon>Bacteria</taxon>
        <taxon>Pseudomonadati</taxon>
        <taxon>Pseudomonadota</taxon>
        <taxon>Gammaproteobacteria</taxon>
        <taxon>Enterobacterales</taxon>
        <taxon>Enterobacteriaceae</taxon>
        <taxon>Shigella</taxon>
    </lineage>
</organism>
<protein>
    <recommendedName>
        <fullName evidence="2">Shikimate kinase 2</fullName>
        <shortName evidence="2">SK 2</shortName>
        <ecNumber evidence="2">2.7.1.71</ecNumber>
    </recommendedName>
</protein>
<accession>Q325L0</accession>